<dbReference type="EMBL" id="CP000738">
    <property type="protein sequence ID" value="ABR62038.1"/>
    <property type="molecule type" value="Genomic_DNA"/>
</dbReference>
<dbReference type="RefSeq" id="WP_012067419.1">
    <property type="nucleotide sequence ID" value="NC_009636.1"/>
</dbReference>
<dbReference type="RefSeq" id="YP_001328873.1">
    <property type="nucleotide sequence ID" value="NC_009636.1"/>
</dbReference>
<dbReference type="SMR" id="A6UEF8"/>
<dbReference type="STRING" id="366394.Smed_3214"/>
<dbReference type="GeneID" id="61610796"/>
<dbReference type="KEGG" id="smd:Smed_3214"/>
<dbReference type="PATRIC" id="fig|366394.8.peg.6452"/>
<dbReference type="eggNOG" id="COG1952">
    <property type="taxonomic scope" value="Bacteria"/>
</dbReference>
<dbReference type="HOGENOM" id="CLU_111574_0_0_5"/>
<dbReference type="OrthoDB" id="9795145at2"/>
<dbReference type="Proteomes" id="UP000001108">
    <property type="component" value="Chromosome"/>
</dbReference>
<dbReference type="GO" id="GO:0005737">
    <property type="term" value="C:cytoplasm"/>
    <property type="evidence" value="ECO:0007669"/>
    <property type="project" value="UniProtKB-SubCell"/>
</dbReference>
<dbReference type="GO" id="GO:0051082">
    <property type="term" value="F:unfolded protein binding"/>
    <property type="evidence" value="ECO:0007669"/>
    <property type="project" value="InterPro"/>
</dbReference>
<dbReference type="GO" id="GO:0006457">
    <property type="term" value="P:protein folding"/>
    <property type="evidence" value="ECO:0007669"/>
    <property type="project" value="UniProtKB-UniRule"/>
</dbReference>
<dbReference type="GO" id="GO:0051262">
    <property type="term" value="P:protein tetramerization"/>
    <property type="evidence" value="ECO:0007669"/>
    <property type="project" value="InterPro"/>
</dbReference>
<dbReference type="GO" id="GO:0015031">
    <property type="term" value="P:protein transport"/>
    <property type="evidence" value="ECO:0007669"/>
    <property type="project" value="UniProtKB-UniRule"/>
</dbReference>
<dbReference type="Gene3D" id="3.10.420.10">
    <property type="entry name" value="SecB-like"/>
    <property type="match status" value="1"/>
</dbReference>
<dbReference type="HAMAP" id="MF_00821">
    <property type="entry name" value="SecB"/>
    <property type="match status" value="1"/>
</dbReference>
<dbReference type="InterPro" id="IPR003708">
    <property type="entry name" value="SecB"/>
</dbReference>
<dbReference type="InterPro" id="IPR035958">
    <property type="entry name" value="SecB-like_sf"/>
</dbReference>
<dbReference type="NCBIfam" id="NF004392">
    <property type="entry name" value="PRK05751.1-3"/>
    <property type="match status" value="1"/>
</dbReference>
<dbReference type="NCBIfam" id="TIGR00809">
    <property type="entry name" value="secB"/>
    <property type="match status" value="1"/>
</dbReference>
<dbReference type="PANTHER" id="PTHR36918">
    <property type="match status" value="1"/>
</dbReference>
<dbReference type="PANTHER" id="PTHR36918:SF1">
    <property type="entry name" value="PROTEIN-EXPORT PROTEIN SECB"/>
    <property type="match status" value="1"/>
</dbReference>
<dbReference type="Pfam" id="PF02556">
    <property type="entry name" value="SecB"/>
    <property type="match status" value="1"/>
</dbReference>
<dbReference type="PRINTS" id="PR01594">
    <property type="entry name" value="SECBCHAPRONE"/>
</dbReference>
<dbReference type="SUPFAM" id="SSF54611">
    <property type="entry name" value="SecB-like"/>
    <property type="match status" value="1"/>
</dbReference>
<gene>
    <name evidence="1" type="primary">secB</name>
    <name type="ordered locus">Smed_3214</name>
</gene>
<feature type="chain" id="PRO_1000062530" description="Protein-export protein SecB">
    <location>
        <begin position="1"/>
        <end position="168"/>
    </location>
</feature>
<reference key="1">
    <citation type="submission" date="2007-06" db="EMBL/GenBank/DDBJ databases">
        <title>Complete sequence of Sinorhizobium medicae WSM419 chromosome.</title>
        <authorList>
            <consortium name="US DOE Joint Genome Institute"/>
            <person name="Copeland A."/>
            <person name="Lucas S."/>
            <person name="Lapidus A."/>
            <person name="Barry K."/>
            <person name="Glavina del Rio T."/>
            <person name="Dalin E."/>
            <person name="Tice H."/>
            <person name="Pitluck S."/>
            <person name="Chain P."/>
            <person name="Malfatti S."/>
            <person name="Shin M."/>
            <person name="Vergez L."/>
            <person name="Schmutz J."/>
            <person name="Larimer F."/>
            <person name="Land M."/>
            <person name="Hauser L."/>
            <person name="Kyrpides N."/>
            <person name="Mikhailova N."/>
            <person name="Reeve W.G."/>
            <person name="Richardson P."/>
        </authorList>
    </citation>
    <scope>NUCLEOTIDE SEQUENCE [LARGE SCALE GENOMIC DNA]</scope>
    <source>
        <strain>WSM419</strain>
    </source>
</reference>
<keyword id="KW-0143">Chaperone</keyword>
<keyword id="KW-0963">Cytoplasm</keyword>
<keyword id="KW-0653">Protein transport</keyword>
<keyword id="KW-0811">Translocation</keyword>
<keyword id="KW-0813">Transport</keyword>
<name>SECB_SINMW</name>
<proteinExistence type="inferred from homology"/>
<evidence type="ECO:0000255" key="1">
    <source>
        <dbReference type="HAMAP-Rule" id="MF_00821"/>
    </source>
</evidence>
<organism>
    <name type="scientific">Sinorhizobium medicae (strain WSM419)</name>
    <name type="common">Ensifer medicae</name>
    <dbReference type="NCBI Taxonomy" id="366394"/>
    <lineage>
        <taxon>Bacteria</taxon>
        <taxon>Pseudomonadati</taxon>
        <taxon>Pseudomonadota</taxon>
        <taxon>Alphaproteobacteria</taxon>
        <taxon>Hyphomicrobiales</taxon>
        <taxon>Rhizobiaceae</taxon>
        <taxon>Sinorhizobium/Ensifer group</taxon>
        <taxon>Sinorhizobium</taxon>
    </lineage>
</organism>
<sequence length="168" mass="18297">MTTDSASNGNGSAQQPSPSLNILAQYVKDLSFENPGAPRSLQARDRSPAININVNVNANPLAENDFDVVLSLSAQAKDGDKMLFNVELAYGGVFRVAGFPQEHMLPLLFIECPRLLFPFARQIVADATRNGGFPPLMIDPIDFAQMFAQRMAEEKVRAQVANTNDTAN</sequence>
<protein>
    <recommendedName>
        <fullName evidence="1">Protein-export protein SecB</fullName>
    </recommendedName>
</protein>
<comment type="function">
    <text evidence="1">One of the proteins required for the normal export of preproteins out of the cell cytoplasm. It is a molecular chaperone that binds to a subset of precursor proteins, maintaining them in a translocation-competent state. It also specifically binds to its receptor SecA.</text>
</comment>
<comment type="subunit">
    <text evidence="1">Homotetramer, a dimer of dimers. One homotetramer interacts with 1 SecA dimer.</text>
</comment>
<comment type="subcellular location">
    <subcellularLocation>
        <location evidence="1">Cytoplasm</location>
    </subcellularLocation>
</comment>
<comment type="similarity">
    <text evidence="1">Belongs to the SecB family.</text>
</comment>
<accession>A6UEF8</accession>